<gene>
    <name evidence="1" type="primary">murQ</name>
    <name type="ordered locus">BCAH820_0918</name>
</gene>
<reference key="1">
    <citation type="submission" date="2008-10" db="EMBL/GenBank/DDBJ databases">
        <title>Genome sequence of Bacillus cereus AH820.</title>
        <authorList>
            <person name="Dodson R.J."/>
            <person name="Durkin A.S."/>
            <person name="Rosovitz M.J."/>
            <person name="Rasko D.A."/>
            <person name="Hoffmaster A."/>
            <person name="Ravel J."/>
            <person name="Sutton G."/>
        </authorList>
    </citation>
    <scope>NUCLEOTIDE SEQUENCE [LARGE SCALE GENOMIC DNA]</scope>
    <source>
        <strain>AH820</strain>
    </source>
</reference>
<proteinExistence type="inferred from homology"/>
<keyword id="KW-0119">Carbohydrate metabolism</keyword>
<keyword id="KW-0456">Lyase</keyword>
<evidence type="ECO:0000255" key="1">
    <source>
        <dbReference type="HAMAP-Rule" id="MF_00068"/>
    </source>
</evidence>
<sequence length="294" mass="32063">MLENLSTEHRNEKTMNLDEMNIKEILQRMNEEDRTVALAVEKEIEHIEKVVRVVIQSFEEEGRLIYIGAGTSGRLGILDAVECPPTFGTDDKMVQGFIAGGLKAFTKAVEGAEDREELAEEDLKSIGLNEKDTVIGIAASGRTPYVIGGLKYANSVGASTASISCNKNAEISKYAKLNVEVETGAEILTGSTRLKAGTAQKLVLNMISTASMIGVGKVYKNLMVDVQSTNEKLVERSKRIIVEATGVSYEVAAEHYEKAERNVKAAIVMVLLQCEYGEALEKLKEAKGFVKKAL</sequence>
<accession>B7JSA1</accession>
<protein>
    <recommendedName>
        <fullName evidence="1">N-acetylmuramic acid 6-phosphate etherase</fullName>
        <shortName evidence="1">MurNAc-6-P etherase</shortName>
        <ecNumber evidence="1">4.2.1.126</ecNumber>
    </recommendedName>
    <alternativeName>
        <fullName evidence="1">N-acetylmuramic acid 6-phosphate hydrolase</fullName>
    </alternativeName>
    <alternativeName>
        <fullName evidence="1">N-acetylmuramic acid 6-phosphate lyase</fullName>
    </alternativeName>
</protein>
<feature type="chain" id="PRO_1000116986" description="N-acetylmuramic acid 6-phosphate etherase">
    <location>
        <begin position="1"/>
        <end position="294"/>
    </location>
</feature>
<feature type="domain" description="SIS" evidence="1">
    <location>
        <begin position="54"/>
        <end position="217"/>
    </location>
</feature>
<feature type="active site" description="Proton donor" evidence="1">
    <location>
        <position position="82"/>
    </location>
</feature>
<feature type="active site" evidence="1">
    <location>
        <position position="113"/>
    </location>
</feature>
<comment type="function">
    <text evidence="1">Specifically catalyzes the cleavage of the D-lactyl ether substituent of MurNAc 6-phosphate, producing GlcNAc 6-phosphate and D-lactate.</text>
</comment>
<comment type="catalytic activity">
    <reaction evidence="1">
        <text>N-acetyl-D-muramate 6-phosphate + H2O = N-acetyl-D-glucosamine 6-phosphate + (R)-lactate</text>
        <dbReference type="Rhea" id="RHEA:26410"/>
        <dbReference type="ChEBI" id="CHEBI:15377"/>
        <dbReference type="ChEBI" id="CHEBI:16004"/>
        <dbReference type="ChEBI" id="CHEBI:57513"/>
        <dbReference type="ChEBI" id="CHEBI:58722"/>
        <dbReference type="EC" id="4.2.1.126"/>
    </reaction>
</comment>
<comment type="pathway">
    <text evidence="1">Amino-sugar metabolism; N-acetylmuramate degradation.</text>
</comment>
<comment type="subunit">
    <text evidence="1">Homodimer.</text>
</comment>
<comment type="miscellaneous">
    <text evidence="1">A lyase-type mechanism (elimination/hydration) is suggested for the cleavage of the lactyl ether bond of MurNAc 6-phosphate, with the formation of an alpha,beta-unsaturated aldehyde intermediate with (E)-stereochemistry, followed by the syn addition of water to give product.</text>
</comment>
<comment type="similarity">
    <text evidence="1">Belongs to the GCKR-like family. MurNAc-6-P etherase subfamily.</text>
</comment>
<name>MURQ_BACC0</name>
<organism>
    <name type="scientific">Bacillus cereus (strain AH820)</name>
    <dbReference type="NCBI Taxonomy" id="405535"/>
    <lineage>
        <taxon>Bacteria</taxon>
        <taxon>Bacillati</taxon>
        <taxon>Bacillota</taxon>
        <taxon>Bacilli</taxon>
        <taxon>Bacillales</taxon>
        <taxon>Bacillaceae</taxon>
        <taxon>Bacillus</taxon>
        <taxon>Bacillus cereus group</taxon>
    </lineage>
</organism>
<dbReference type="EC" id="4.2.1.126" evidence="1"/>
<dbReference type="EMBL" id="CP001283">
    <property type="protein sequence ID" value="ACK90094.1"/>
    <property type="molecule type" value="Genomic_DNA"/>
</dbReference>
<dbReference type="RefSeq" id="WP_000892328.1">
    <property type="nucleotide sequence ID" value="NC_011773.1"/>
</dbReference>
<dbReference type="SMR" id="B7JSA1"/>
<dbReference type="KEGG" id="bcu:BCAH820_0918"/>
<dbReference type="HOGENOM" id="CLU_049049_1_1_9"/>
<dbReference type="UniPathway" id="UPA00342"/>
<dbReference type="Proteomes" id="UP000001363">
    <property type="component" value="Chromosome"/>
</dbReference>
<dbReference type="GO" id="GO:0097367">
    <property type="term" value="F:carbohydrate derivative binding"/>
    <property type="evidence" value="ECO:0007669"/>
    <property type="project" value="InterPro"/>
</dbReference>
<dbReference type="GO" id="GO:0016835">
    <property type="term" value="F:carbon-oxygen lyase activity"/>
    <property type="evidence" value="ECO:0007669"/>
    <property type="project" value="UniProtKB-UniRule"/>
</dbReference>
<dbReference type="GO" id="GO:0016803">
    <property type="term" value="F:ether hydrolase activity"/>
    <property type="evidence" value="ECO:0007669"/>
    <property type="project" value="TreeGrafter"/>
</dbReference>
<dbReference type="GO" id="GO:0046348">
    <property type="term" value="P:amino sugar catabolic process"/>
    <property type="evidence" value="ECO:0007669"/>
    <property type="project" value="InterPro"/>
</dbReference>
<dbReference type="GO" id="GO:0097173">
    <property type="term" value="P:N-acetylmuramic acid catabolic process"/>
    <property type="evidence" value="ECO:0007669"/>
    <property type="project" value="UniProtKB-UniPathway"/>
</dbReference>
<dbReference type="GO" id="GO:0009254">
    <property type="term" value="P:peptidoglycan turnover"/>
    <property type="evidence" value="ECO:0007669"/>
    <property type="project" value="TreeGrafter"/>
</dbReference>
<dbReference type="CDD" id="cd05007">
    <property type="entry name" value="SIS_Etherase"/>
    <property type="match status" value="1"/>
</dbReference>
<dbReference type="FunFam" id="1.10.8.1080:FF:000001">
    <property type="entry name" value="N-acetylmuramic acid 6-phosphate etherase"/>
    <property type="match status" value="1"/>
</dbReference>
<dbReference type="FunFam" id="3.40.50.10490:FF:000014">
    <property type="entry name" value="N-acetylmuramic acid 6-phosphate etherase"/>
    <property type="match status" value="1"/>
</dbReference>
<dbReference type="Gene3D" id="1.10.8.1080">
    <property type="match status" value="1"/>
</dbReference>
<dbReference type="Gene3D" id="3.40.50.10490">
    <property type="entry name" value="Glucose-6-phosphate isomerase like protein, domain 1"/>
    <property type="match status" value="1"/>
</dbReference>
<dbReference type="HAMAP" id="MF_00068">
    <property type="entry name" value="MurQ"/>
    <property type="match status" value="1"/>
</dbReference>
<dbReference type="InterPro" id="IPR005488">
    <property type="entry name" value="Etherase_MurQ"/>
</dbReference>
<dbReference type="InterPro" id="IPR005486">
    <property type="entry name" value="Glucokinase_regulatory_CS"/>
</dbReference>
<dbReference type="InterPro" id="IPR040190">
    <property type="entry name" value="MURQ/GCKR"/>
</dbReference>
<dbReference type="InterPro" id="IPR001347">
    <property type="entry name" value="SIS_dom"/>
</dbReference>
<dbReference type="InterPro" id="IPR046348">
    <property type="entry name" value="SIS_dom_sf"/>
</dbReference>
<dbReference type="NCBIfam" id="TIGR00274">
    <property type="entry name" value="N-acetylmuramic acid 6-phosphate etherase"/>
    <property type="match status" value="1"/>
</dbReference>
<dbReference type="NCBIfam" id="NF003915">
    <property type="entry name" value="PRK05441.1"/>
    <property type="match status" value="1"/>
</dbReference>
<dbReference type="NCBIfam" id="NF009222">
    <property type="entry name" value="PRK12570.1"/>
    <property type="match status" value="1"/>
</dbReference>
<dbReference type="PANTHER" id="PTHR10088">
    <property type="entry name" value="GLUCOKINASE REGULATORY PROTEIN"/>
    <property type="match status" value="1"/>
</dbReference>
<dbReference type="PANTHER" id="PTHR10088:SF4">
    <property type="entry name" value="GLUCOKINASE REGULATORY PROTEIN"/>
    <property type="match status" value="1"/>
</dbReference>
<dbReference type="Pfam" id="PF22645">
    <property type="entry name" value="GKRP_SIS_N"/>
    <property type="match status" value="1"/>
</dbReference>
<dbReference type="SUPFAM" id="SSF53697">
    <property type="entry name" value="SIS domain"/>
    <property type="match status" value="1"/>
</dbReference>
<dbReference type="PROSITE" id="PS01272">
    <property type="entry name" value="GCKR"/>
    <property type="match status" value="1"/>
</dbReference>
<dbReference type="PROSITE" id="PS51464">
    <property type="entry name" value="SIS"/>
    <property type="match status" value="1"/>
</dbReference>